<name>ANR55_HUMAN</name>
<comment type="interaction">
    <interactant intactId="EBI-14493093">
        <id>Q3KP44</id>
    </interactant>
    <interactant intactId="EBI-11096309">
        <id>Q9NYB9-2</id>
        <label>ABI2</label>
    </interactant>
    <organismsDiffer>false</organismsDiffer>
    <experiments>3</experiments>
</comment>
<comment type="interaction">
    <interactant intactId="EBI-14493093">
        <id>Q3KP44</id>
    </interactant>
    <interactant intactId="EBI-11954519">
        <id>Q49AR9</id>
        <label>ANKS1A</label>
    </interactant>
    <organismsDiffer>false</organismsDiffer>
    <experiments>3</experiments>
</comment>
<comment type="interaction">
    <interactant intactId="EBI-14493093">
        <id>Q3KP44</id>
    </interactant>
    <interactant intactId="EBI-1642333">
        <id>Q9BYV9</id>
        <label>BACH2</label>
    </interactant>
    <organismsDiffer>false</organismsDiffer>
    <experiments>3</experiments>
</comment>
<comment type="interaction">
    <interactant intactId="EBI-14493093">
        <id>Q3KP44</id>
    </interactant>
    <interactant intactId="EBI-11524452">
        <id>Q8N9N5-2</id>
        <label>BANP</label>
    </interactant>
    <organismsDiffer>false</organismsDiffer>
    <experiments>3</experiments>
</comment>
<comment type="interaction">
    <interactant intactId="EBI-14493093">
        <id>Q3KP44</id>
    </interactant>
    <interactant intactId="EBI-12006120">
        <id>A0A087WZT3</id>
        <label>BOLA2-SMG1P6</label>
    </interactant>
    <organismsDiffer>false</organismsDiffer>
    <experiments>3</experiments>
</comment>
<comment type="interaction">
    <interactant intactId="EBI-14493093">
        <id>Q3KP44</id>
    </interactant>
    <interactant intactId="EBI-10311131">
        <id>Q9NP86</id>
        <label>CABP5</label>
    </interactant>
    <organismsDiffer>false</organismsDiffer>
    <experiments>3</experiments>
</comment>
<comment type="interaction">
    <interactant intactId="EBI-14493093">
        <id>Q3KP44</id>
    </interactant>
    <interactant intactId="EBI-749051">
        <id>Q8IYR0</id>
        <label>CFAP206</label>
    </interactant>
    <organismsDiffer>false</organismsDiffer>
    <experiments>3</experiments>
</comment>
<comment type="interaction">
    <interactant intactId="EBI-14493093">
        <id>Q3KP44</id>
    </interactant>
    <interactant intactId="EBI-725145">
        <id>O76071</id>
        <label>CIAO1</label>
    </interactant>
    <organismsDiffer>false</organismsDiffer>
    <experiments>3</experiments>
</comment>
<comment type="interaction">
    <interactant intactId="EBI-14493093">
        <id>Q3KP44</id>
    </interactant>
    <interactant intactId="EBI-10192241">
        <id>O95833</id>
        <label>CLIC3</label>
    </interactant>
    <organismsDiffer>false</organismsDiffer>
    <experiments>3</experiments>
</comment>
<comment type="interaction">
    <interactant intactId="EBI-14493093">
        <id>Q3KP44</id>
    </interactant>
    <interactant intactId="EBI-2339898">
        <id>Q9NW38</id>
        <label>FANCL</label>
    </interactant>
    <organismsDiffer>false</organismsDiffer>
    <experiments>3</experiments>
</comment>
<comment type="interaction">
    <interactant intactId="EBI-14493093">
        <id>Q3KP44</id>
    </interactant>
    <interactant intactId="EBI-701903">
        <id>Q14192</id>
        <label>FHL2</label>
    </interactant>
    <organismsDiffer>false</organismsDiffer>
    <experiments>3</experiments>
</comment>
<comment type="interaction">
    <interactant intactId="EBI-14493093">
        <id>Q3KP44</id>
    </interactant>
    <interactant intactId="EBI-750641">
        <id>Q5TD97</id>
        <label>FHL5</label>
    </interactant>
    <organismsDiffer>false</organismsDiffer>
    <experiments>3</experiments>
</comment>
<comment type="interaction">
    <interactant intactId="EBI-14493093">
        <id>Q3KP44</id>
    </interactant>
    <interactant intactId="EBI-725515">
        <id>O43559</id>
        <label>FRS3</label>
    </interactant>
    <organismsDiffer>false</organismsDiffer>
    <experiments>3</experiments>
</comment>
<comment type="interaction">
    <interactant intactId="EBI-14493093">
        <id>Q3KP44</id>
    </interactant>
    <interactant intactId="EBI-740220">
        <id>O14964</id>
        <label>HGS</label>
    </interactant>
    <organismsDiffer>false</organismsDiffer>
    <experiments>3</experiments>
</comment>
<comment type="interaction">
    <interactant intactId="EBI-14493093">
        <id>Q3KP44</id>
    </interactant>
    <interactant intactId="EBI-7116203">
        <id>O75031</id>
        <label>HSF2BP</label>
    </interactant>
    <organismsDiffer>false</organismsDiffer>
    <experiments>3</experiments>
</comment>
<comment type="interaction">
    <interactant intactId="EBI-14493093">
        <id>Q3KP44</id>
    </interactant>
    <interactant intactId="EBI-713635">
        <id>O43639</id>
        <label>NCK2</label>
    </interactant>
    <organismsDiffer>false</organismsDiffer>
    <experiments>3</experiments>
</comment>
<comment type="interaction">
    <interactant intactId="EBI-14493093">
        <id>Q3KP44</id>
    </interactant>
    <interactant intactId="EBI-12025760">
        <id>Q86UR1-2</id>
        <label>NOXA1</label>
    </interactant>
    <organismsDiffer>false</organismsDiffer>
    <experiments>3</experiments>
</comment>
<comment type="interaction">
    <interactant intactId="EBI-14493093">
        <id>Q3KP44</id>
    </interactant>
    <interactant intactId="EBI-357275">
        <id>Q99471</id>
        <label>PFDN5</label>
    </interactant>
    <organismsDiffer>false</organismsDiffer>
    <experiments>3</experiments>
</comment>
<comment type="interaction">
    <interactant intactId="EBI-14493093">
        <id>Q3KP44</id>
    </interactant>
    <interactant intactId="EBI-1383632">
        <id>Q13882</id>
        <label>PTK6</label>
    </interactant>
    <organismsDiffer>false</organismsDiffer>
    <experiments>3</experiments>
</comment>
<comment type="interaction">
    <interactant intactId="EBI-14493093">
        <id>Q3KP44</id>
    </interactant>
    <interactant intactId="EBI-750487">
        <id>Q8WW24</id>
        <label>TEKT4</label>
    </interactant>
    <organismsDiffer>false</organismsDiffer>
    <experiments>3</experiments>
</comment>
<comment type="interaction">
    <interactant intactId="EBI-14493093">
        <id>Q3KP44</id>
    </interactant>
    <interactant intactId="EBI-740098">
        <id>P36406</id>
        <label>TRIM23</label>
    </interactant>
    <organismsDiffer>false</organismsDiffer>
    <experiments>3</experiments>
</comment>
<comment type="interaction">
    <interactant intactId="EBI-14493093">
        <id>Q3KP44</id>
    </interactant>
    <interactant intactId="EBI-746595">
        <id>Q96E35</id>
        <label>ZMYND19</label>
    </interactant>
    <organismsDiffer>false</organismsDiffer>
    <experiments>3</experiments>
</comment>
<comment type="alternative products">
    <event type="alternative splicing"/>
    <isoform>
        <id>Q3KP44-1</id>
        <name>1</name>
        <sequence type="displayed"/>
    </isoform>
    <isoform>
        <id>Q3KP44-2</id>
        <name>2</name>
        <sequence type="described" ref="VSP_022740"/>
    </isoform>
    <isoform>
        <id>Q3KP44-3</id>
        <name>3</name>
        <sequence type="described" ref="VSP_022740 VSP_022741"/>
    </isoform>
</comment>
<proteinExistence type="evidence at protein level"/>
<evidence type="ECO:0000250" key="1">
    <source>
        <dbReference type="UniProtKB" id="Q8BLD6"/>
    </source>
</evidence>
<evidence type="ECO:0000256" key="2">
    <source>
        <dbReference type="SAM" id="MobiDB-lite"/>
    </source>
</evidence>
<evidence type="ECO:0000269" key="3">
    <source>
    </source>
</evidence>
<evidence type="ECO:0000303" key="4">
    <source>
    </source>
</evidence>
<evidence type="ECO:0000303" key="5">
    <source>
    </source>
</evidence>
<gene>
    <name type="primary">ANKRD55</name>
</gene>
<keyword id="KW-0025">Alternative splicing</keyword>
<keyword id="KW-0040">ANK repeat</keyword>
<keyword id="KW-0597">Phosphoprotein</keyword>
<keyword id="KW-1185">Reference proteome</keyword>
<keyword id="KW-0677">Repeat</keyword>
<accession>Q3KP44</accession>
<accession>B3KVT8</accession>
<accession>Q3KP45</accession>
<accession>Q9HAD3</accession>
<protein>
    <recommendedName>
        <fullName>Ankyrin repeat domain-containing protein 55</fullName>
    </recommendedName>
</protein>
<dbReference type="EMBL" id="AK021857">
    <property type="protein sequence ID" value="BAB13916.1"/>
    <property type="molecule type" value="mRNA"/>
</dbReference>
<dbReference type="EMBL" id="AK123389">
    <property type="protein sequence ID" value="BAG53900.1"/>
    <property type="molecule type" value="mRNA"/>
</dbReference>
<dbReference type="EMBL" id="AC016585">
    <property type="status" value="NOT_ANNOTATED_CDS"/>
    <property type="molecule type" value="Genomic_DNA"/>
</dbReference>
<dbReference type="EMBL" id="AC016638">
    <property type="status" value="NOT_ANNOTATED_CDS"/>
    <property type="molecule type" value="Genomic_DNA"/>
</dbReference>
<dbReference type="EMBL" id="CH471123">
    <property type="protein sequence ID" value="EAW54941.1"/>
    <property type="molecule type" value="Genomic_DNA"/>
</dbReference>
<dbReference type="EMBL" id="BC106914">
    <property type="protein sequence ID" value="AAI06915.1"/>
    <property type="molecule type" value="mRNA"/>
</dbReference>
<dbReference type="EMBL" id="BC106915">
    <property type="protein sequence ID" value="AAI06916.1"/>
    <property type="molecule type" value="mRNA"/>
</dbReference>
<dbReference type="CCDS" id="CCDS34161.1">
    <molecule id="Q3KP44-1"/>
</dbReference>
<dbReference type="RefSeq" id="NP_078945.2">
    <molecule id="Q3KP44-1"/>
    <property type="nucleotide sequence ID" value="NM_024669.3"/>
</dbReference>
<dbReference type="RefSeq" id="XP_016865342.1">
    <property type="nucleotide sequence ID" value="XM_017009853.1"/>
</dbReference>
<dbReference type="SMR" id="Q3KP44"/>
<dbReference type="BioGRID" id="122837">
    <property type="interactions" value="228"/>
</dbReference>
<dbReference type="FunCoup" id="Q3KP44">
    <property type="interactions" value="117"/>
</dbReference>
<dbReference type="IntAct" id="Q3KP44">
    <property type="interactions" value="37"/>
</dbReference>
<dbReference type="STRING" id="9606.ENSP00000342295"/>
<dbReference type="iPTMnet" id="Q3KP44"/>
<dbReference type="PhosphoSitePlus" id="Q3KP44"/>
<dbReference type="BioMuta" id="ANKRD55"/>
<dbReference type="DMDM" id="408360322"/>
<dbReference type="jPOST" id="Q3KP44"/>
<dbReference type="MassIVE" id="Q3KP44"/>
<dbReference type="PaxDb" id="9606-ENSP00000342295"/>
<dbReference type="PeptideAtlas" id="Q3KP44"/>
<dbReference type="ProteomicsDB" id="3767"/>
<dbReference type="ProteomicsDB" id="61712">
    <molecule id="Q3KP44-1"/>
</dbReference>
<dbReference type="Antibodypedia" id="62397">
    <property type="antibodies" value="52 antibodies from 16 providers"/>
</dbReference>
<dbReference type="DNASU" id="79722"/>
<dbReference type="Ensembl" id="ENST00000341048.9">
    <molecule id="Q3KP44-1"/>
    <property type="protein sequence ID" value="ENSP00000342295.4"/>
    <property type="gene ID" value="ENSG00000164512.18"/>
</dbReference>
<dbReference type="Ensembl" id="ENST00000434982.2">
    <molecule id="Q3KP44-2"/>
    <property type="protein sequence ID" value="ENSP00000429421.1"/>
    <property type="gene ID" value="ENSG00000164512.18"/>
</dbReference>
<dbReference type="GeneID" id="79722"/>
<dbReference type="KEGG" id="hsa:79722"/>
<dbReference type="MANE-Select" id="ENST00000341048.9">
    <property type="protein sequence ID" value="ENSP00000342295.4"/>
    <property type="RefSeq nucleotide sequence ID" value="NM_024669.3"/>
    <property type="RefSeq protein sequence ID" value="NP_078945.2"/>
</dbReference>
<dbReference type="UCSC" id="uc003jqt.4">
    <molecule id="Q3KP44-1"/>
    <property type="organism name" value="human"/>
</dbReference>
<dbReference type="AGR" id="HGNC:25681"/>
<dbReference type="CTD" id="79722"/>
<dbReference type="DisGeNET" id="79722"/>
<dbReference type="GeneCards" id="ANKRD55"/>
<dbReference type="HGNC" id="HGNC:25681">
    <property type="gene designation" value="ANKRD55"/>
</dbReference>
<dbReference type="HPA" id="ENSG00000164512">
    <property type="expression patterns" value="Tissue enhanced (brain, lymphoid tissue, testis)"/>
</dbReference>
<dbReference type="MalaCards" id="ANKRD55"/>
<dbReference type="MIM" id="615189">
    <property type="type" value="gene"/>
</dbReference>
<dbReference type="neXtProt" id="NX_Q3KP44"/>
<dbReference type="OpenTargets" id="ENSG00000164512"/>
<dbReference type="Orphanet" id="85410">
    <property type="disease" value="Oligoarticular juvenile idiopathic arthritis"/>
</dbReference>
<dbReference type="Orphanet" id="85408">
    <property type="disease" value="Rheumatoid factor-negative polyarticular juvenile idiopathic arthritis"/>
</dbReference>
<dbReference type="PharmGKB" id="PA145149863"/>
<dbReference type="VEuPathDB" id="HostDB:ENSG00000164512"/>
<dbReference type="eggNOG" id="KOG0504">
    <property type="taxonomic scope" value="Eukaryota"/>
</dbReference>
<dbReference type="GeneTree" id="ENSGT00950000182908"/>
<dbReference type="HOGENOM" id="CLU_031050_0_0_1"/>
<dbReference type="InParanoid" id="Q3KP44"/>
<dbReference type="OrthoDB" id="539213at2759"/>
<dbReference type="PAN-GO" id="Q3KP44">
    <property type="GO annotations" value="0 GO annotations based on evolutionary models"/>
</dbReference>
<dbReference type="PhylomeDB" id="Q3KP44"/>
<dbReference type="TreeFam" id="TF315452"/>
<dbReference type="PathwayCommons" id="Q3KP44"/>
<dbReference type="SignaLink" id="Q3KP44"/>
<dbReference type="BioGRID-ORCS" id="79722">
    <property type="hits" value="7 hits in 1143 CRISPR screens"/>
</dbReference>
<dbReference type="ChiTaRS" id="ANKRD55">
    <property type="organism name" value="human"/>
</dbReference>
<dbReference type="GenomeRNAi" id="79722"/>
<dbReference type="Pharos" id="Q3KP44">
    <property type="development level" value="Tbio"/>
</dbReference>
<dbReference type="PRO" id="PR:Q3KP44"/>
<dbReference type="Proteomes" id="UP000005640">
    <property type="component" value="Chromosome 5"/>
</dbReference>
<dbReference type="RNAct" id="Q3KP44">
    <property type="molecule type" value="protein"/>
</dbReference>
<dbReference type="Bgee" id="ENSG00000164512">
    <property type="expression patterns" value="Expressed in male germ line stem cell (sensu Vertebrata) in testis and 127 other cell types or tissues"/>
</dbReference>
<dbReference type="ExpressionAtlas" id="Q3KP44">
    <property type="expression patterns" value="baseline and differential"/>
</dbReference>
<dbReference type="Gene3D" id="1.25.40.20">
    <property type="entry name" value="Ankyrin repeat-containing domain"/>
    <property type="match status" value="3"/>
</dbReference>
<dbReference type="InterPro" id="IPR002110">
    <property type="entry name" value="Ankyrin_rpt"/>
</dbReference>
<dbReference type="InterPro" id="IPR036770">
    <property type="entry name" value="Ankyrin_rpt-contain_sf"/>
</dbReference>
<dbReference type="PANTHER" id="PTHR24198">
    <property type="entry name" value="ANKYRIN REPEAT AND PROTEIN KINASE DOMAIN-CONTAINING PROTEIN"/>
    <property type="match status" value="1"/>
</dbReference>
<dbReference type="PANTHER" id="PTHR24198:SF188">
    <property type="entry name" value="ANKYRIN REPEAT DOMAIN 55"/>
    <property type="match status" value="1"/>
</dbReference>
<dbReference type="Pfam" id="PF00023">
    <property type="entry name" value="Ank"/>
    <property type="match status" value="1"/>
</dbReference>
<dbReference type="Pfam" id="PF12796">
    <property type="entry name" value="Ank_2"/>
    <property type="match status" value="2"/>
</dbReference>
<dbReference type="SMART" id="SM00248">
    <property type="entry name" value="ANK"/>
    <property type="match status" value="9"/>
</dbReference>
<dbReference type="SUPFAM" id="SSF48403">
    <property type="entry name" value="Ankyrin repeat"/>
    <property type="match status" value="1"/>
</dbReference>
<dbReference type="PROSITE" id="PS50297">
    <property type="entry name" value="ANK_REP_REGION"/>
    <property type="match status" value="1"/>
</dbReference>
<dbReference type="PROSITE" id="PS50088">
    <property type="entry name" value="ANK_REPEAT"/>
    <property type="match status" value="3"/>
</dbReference>
<feature type="chain" id="PRO_0000274410" description="Ankyrin repeat domain-containing protein 55">
    <location>
        <begin position="1"/>
        <end position="614"/>
    </location>
</feature>
<feature type="repeat" description="ANK 1">
    <location>
        <begin position="26"/>
        <end position="55"/>
    </location>
</feature>
<feature type="repeat" description="ANK 2">
    <location>
        <begin position="60"/>
        <end position="89"/>
    </location>
</feature>
<feature type="repeat" description="ANK 3">
    <location>
        <begin position="93"/>
        <end position="125"/>
    </location>
</feature>
<feature type="repeat" description="ANK 4">
    <location>
        <begin position="126"/>
        <end position="157"/>
    </location>
</feature>
<feature type="repeat" description="ANK 5">
    <location>
        <begin position="161"/>
        <end position="190"/>
    </location>
</feature>
<feature type="repeat" description="ANK 6">
    <location>
        <begin position="194"/>
        <end position="223"/>
    </location>
</feature>
<feature type="repeat" description="ANK 7">
    <location>
        <begin position="230"/>
        <end position="260"/>
    </location>
</feature>
<feature type="repeat" description="ANK 8">
    <location>
        <begin position="264"/>
        <end position="293"/>
    </location>
</feature>
<feature type="repeat" description="ANK 9">
    <location>
        <begin position="297"/>
        <end position="326"/>
    </location>
</feature>
<feature type="region of interest" description="Disordered" evidence="2">
    <location>
        <begin position="1"/>
        <end position="20"/>
    </location>
</feature>
<feature type="region of interest" description="Disordered" evidence="2">
    <location>
        <begin position="319"/>
        <end position="339"/>
    </location>
</feature>
<feature type="region of interest" description="Disordered" evidence="2">
    <location>
        <begin position="354"/>
        <end position="375"/>
    </location>
</feature>
<feature type="region of interest" description="Disordered" evidence="2">
    <location>
        <begin position="454"/>
        <end position="476"/>
    </location>
</feature>
<feature type="region of interest" description="Disordered" evidence="2">
    <location>
        <begin position="564"/>
        <end position="614"/>
    </location>
</feature>
<feature type="compositionally biased region" description="Polar residues" evidence="2">
    <location>
        <begin position="7"/>
        <end position="16"/>
    </location>
</feature>
<feature type="compositionally biased region" description="Basic and acidic residues" evidence="2">
    <location>
        <begin position="354"/>
        <end position="373"/>
    </location>
</feature>
<feature type="modified residue" description="Phosphoserine" evidence="1">
    <location>
        <position position="475"/>
    </location>
</feature>
<feature type="splice variant" id="VSP_022740" description="In isoform 2 and isoform 3." evidence="4 5">
    <location>
        <begin position="1"/>
        <end position="288"/>
    </location>
</feature>
<feature type="splice variant" id="VSP_022741" description="In isoform 3." evidence="4">
    <original>MDSNLRDINESTPLAYALYCGHTACVKLLSQES</original>
    <variation>ML</variation>
    <location>
        <begin position="289"/>
        <end position="321"/>
    </location>
</feature>
<feature type="sequence variant" id="VAR_030283" description="In dbSNP:rs321776." evidence="3">
    <original>V</original>
    <variation>M</variation>
    <location>
        <position position="345"/>
    </location>
</feature>
<feature type="sequence variant" id="VAR_055516" description="In dbSNP:rs34879141.">
    <original>R</original>
    <variation>Q</variation>
    <location>
        <position position="594"/>
    </location>
</feature>
<organism>
    <name type="scientific">Homo sapiens</name>
    <name type="common">Human</name>
    <dbReference type="NCBI Taxonomy" id="9606"/>
    <lineage>
        <taxon>Eukaryota</taxon>
        <taxon>Metazoa</taxon>
        <taxon>Chordata</taxon>
        <taxon>Craniata</taxon>
        <taxon>Vertebrata</taxon>
        <taxon>Euteleostomi</taxon>
        <taxon>Mammalia</taxon>
        <taxon>Eutheria</taxon>
        <taxon>Euarchontoglires</taxon>
        <taxon>Primates</taxon>
        <taxon>Haplorrhini</taxon>
        <taxon>Catarrhini</taxon>
        <taxon>Hominidae</taxon>
        <taxon>Homo</taxon>
    </lineage>
</organism>
<reference key="1">
    <citation type="journal article" date="2004" name="Nat. Genet.">
        <title>Complete sequencing and characterization of 21,243 full-length human cDNAs.</title>
        <authorList>
            <person name="Ota T."/>
            <person name="Suzuki Y."/>
            <person name="Nishikawa T."/>
            <person name="Otsuki T."/>
            <person name="Sugiyama T."/>
            <person name="Irie R."/>
            <person name="Wakamatsu A."/>
            <person name="Hayashi K."/>
            <person name="Sato H."/>
            <person name="Nagai K."/>
            <person name="Kimura K."/>
            <person name="Makita H."/>
            <person name="Sekine M."/>
            <person name="Obayashi M."/>
            <person name="Nishi T."/>
            <person name="Shibahara T."/>
            <person name="Tanaka T."/>
            <person name="Ishii S."/>
            <person name="Yamamoto J."/>
            <person name="Saito K."/>
            <person name="Kawai Y."/>
            <person name="Isono Y."/>
            <person name="Nakamura Y."/>
            <person name="Nagahari K."/>
            <person name="Murakami K."/>
            <person name="Yasuda T."/>
            <person name="Iwayanagi T."/>
            <person name="Wagatsuma M."/>
            <person name="Shiratori A."/>
            <person name="Sudo H."/>
            <person name="Hosoiri T."/>
            <person name="Kaku Y."/>
            <person name="Kodaira H."/>
            <person name="Kondo H."/>
            <person name="Sugawara M."/>
            <person name="Takahashi M."/>
            <person name="Kanda K."/>
            <person name="Yokoi T."/>
            <person name="Furuya T."/>
            <person name="Kikkawa E."/>
            <person name="Omura Y."/>
            <person name="Abe K."/>
            <person name="Kamihara K."/>
            <person name="Katsuta N."/>
            <person name="Sato K."/>
            <person name="Tanikawa M."/>
            <person name="Yamazaki M."/>
            <person name="Ninomiya K."/>
            <person name="Ishibashi T."/>
            <person name="Yamashita H."/>
            <person name="Murakawa K."/>
            <person name="Fujimori K."/>
            <person name="Tanai H."/>
            <person name="Kimata M."/>
            <person name="Watanabe M."/>
            <person name="Hiraoka S."/>
            <person name="Chiba Y."/>
            <person name="Ishida S."/>
            <person name="Ono Y."/>
            <person name="Takiguchi S."/>
            <person name="Watanabe S."/>
            <person name="Yosida M."/>
            <person name="Hotuta T."/>
            <person name="Kusano J."/>
            <person name="Kanehori K."/>
            <person name="Takahashi-Fujii A."/>
            <person name="Hara H."/>
            <person name="Tanase T.-O."/>
            <person name="Nomura Y."/>
            <person name="Togiya S."/>
            <person name="Komai F."/>
            <person name="Hara R."/>
            <person name="Takeuchi K."/>
            <person name="Arita M."/>
            <person name="Imose N."/>
            <person name="Musashino K."/>
            <person name="Yuuki H."/>
            <person name="Oshima A."/>
            <person name="Sasaki N."/>
            <person name="Aotsuka S."/>
            <person name="Yoshikawa Y."/>
            <person name="Matsunawa H."/>
            <person name="Ichihara T."/>
            <person name="Shiohata N."/>
            <person name="Sano S."/>
            <person name="Moriya S."/>
            <person name="Momiyama H."/>
            <person name="Satoh N."/>
            <person name="Takami S."/>
            <person name="Terashima Y."/>
            <person name="Suzuki O."/>
            <person name="Nakagawa S."/>
            <person name="Senoh A."/>
            <person name="Mizoguchi H."/>
            <person name="Goto Y."/>
            <person name="Shimizu F."/>
            <person name="Wakebe H."/>
            <person name="Hishigaki H."/>
            <person name="Watanabe T."/>
            <person name="Sugiyama A."/>
            <person name="Takemoto M."/>
            <person name="Kawakami B."/>
            <person name="Yamazaki M."/>
            <person name="Watanabe K."/>
            <person name="Kumagai A."/>
            <person name="Itakura S."/>
            <person name="Fukuzumi Y."/>
            <person name="Fujimori Y."/>
            <person name="Komiyama M."/>
            <person name="Tashiro H."/>
            <person name="Tanigami A."/>
            <person name="Fujiwara T."/>
            <person name="Ono T."/>
            <person name="Yamada K."/>
            <person name="Fujii Y."/>
            <person name="Ozaki K."/>
            <person name="Hirao M."/>
            <person name="Ohmori Y."/>
            <person name="Kawabata A."/>
            <person name="Hikiji T."/>
            <person name="Kobatake N."/>
            <person name="Inagaki H."/>
            <person name="Ikema Y."/>
            <person name="Okamoto S."/>
            <person name="Okitani R."/>
            <person name="Kawakami T."/>
            <person name="Noguchi S."/>
            <person name="Itoh T."/>
            <person name="Shigeta K."/>
            <person name="Senba T."/>
            <person name="Matsumura K."/>
            <person name="Nakajima Y."/>
            <person name="Mizuno T."/>
            <person name="Morinaga M."/>
            <person name="Sasaki M."/>
            <person name="Togashi T."/>
            <person name="Oyama M."/>
            <person name="Hata H."/>
            <person name="Watanabe M."/>
            <person name="Komatsu T."/>
            <person name="Mizushima-Sugano J."/>
            <person name="Satoh T."/>
            <person name="Shirai Y."/>
            <person name="Takahashi Y."/>
            <person name="Nakagawa K."/>
            <person name="Okumura K."/>
            <person name="Nagase T."/>
            <person name="Nomura N."/>
            <person name="Kikuchi H."/>
            <person name="Masuho Y."/>
            <person name="Yamashita R."/>
            <person name="Nakai K."/>
            <person name="Yada T."/>
            <person name="Nakamura Y."/>
            <person name="Ohara O."/>
            <person name="Isogai T."/>
            <person name="Sugano S."/>
        </authorList>
    </citation>
    <scope>NUCLEOTIDE SEQUENCE [LARGE SCALE MRNA] (ISOFORMS 1 AND 3)</scope>
    <source>
        <tissue>Corpus callosum</tissue>
        <tissue>Embryo</tissue>
    </source>
</reference>
<reference key="2">
    <citation type="journal article" date="2004" name="Nature">
        <title>The DNA sequence and comparative analysis of human chromosome 5.</title>
        <authorList>
            <person name="Schmutz J."/>
            <person name="Martin J."/>
            <person name="Terry A."/>
            <person name="Couronne O."/>
            <person name="Grimwood J."/>
            <person name="Lowry S."/>
            <person name="Gordon L.A."/>
            <person name="Scott D."/>
            <person name="Xie G."/>
            <person name="Huang W."/>
            <person name="Hellsten U."/>
            <person name="Tran-Gyamfi M."/>
            <person name="She X."/>
            <person name="Prabhakar S."/>
            <person name="Aerts A."/>
            <person name="Altherr M."/>
            <person name="Bajorek E."/>
            <person name="Black S."/>
            <person name="Branscomb E."/>
            <person name="Caoile C."/>
            <person name="Challacombe J.F."/>
            <person name="Chan Y.M."/>
            <person name="Denys M."/>
            <person name="Detter J.C."/>
            <person name="Escobar J."/>
            <person name="Flowers D."/>
            <person name="Fotopulos D."/>
            <person name="Glavina T."/>
            <person name="Gomez M."/>
            <person name="Gonzales E."/>
            <person name="Goodstein D."/>
            <person name="Grigoriev I."/>
            <person name="Groza M."/>
            <person name="Hammon N."/>
            <person name="Hawkins T."/>
            <person name="Haydu L."/>
            <person name="Israni S."/>
            <person name="Jett J."/>
            <person name="Kadner K."/>
            <person name="Kimball H."/>
            <person name="Kobayashi A."/>
            <person name="Lopez F."/>
            <person name="Lou Y."/>
            <person name="Martinez D."/>
            <person name="Medina C."/>
            <person name="Morgan J."/>
            <person name="Nandkeshwar R."/>
            <person name="Noonan J.P."/>
            <person name="Pitluck S."/>
            <person name="Pollard M."/>
            <person name="Predki P."/>
            <person name="Priest J."/>
            <person name="Ramirez L."/>
            <person name="Retterer J."/>
            <person name="Rodriguez A."/>
            <person name="Rogers S."/>
            <person name="Salamov A."/>
            <person name="Salazar A."/>
            <person name="Thayer N."/>
            <person name="Tice H."/>
            <person name="Tsai M."/>
            <person name="Ustaszewska A."/>
            <person name="Vo N."/>
            <person name="Wheeler J."/>
            <person name="Wu K."/>
            <person name="Yang J."/>
            <person name="Dickson M."/>
            <person name="Cheng J.-F."/>
            <person name="Eichler E.E."/>
            <person name="Olsen A."/>
            <person name="Pennacchio L.A."/>
            <person name="Rokhsar D.S."/>
            <person name="Richardson P."/>
            <person name="Lucas S.M."/>
            <person name="Myers R.M."/>
            <person name="Rubin E.M."/>
        </authorList>
    </citation>
    <scope>NUCLEOTIDE SEQUENCE [LARGE SCALE GENOMIC DNA]</scope>
</reference>
<reference key="3">
    <citation type="submission" date="2005-07" db="EMBL/GenBank/DDBJ databases">
        <authorList>
            <person name="Mural R.J."/>
            <person name="Istrail S."/>
            <person name="Sutton G."/>
            <person name="Florea L."/>
            <person name="Halpern A.L."/>
            <person name="Mobarry C.M."/>
            <person name="Lippert R."/>
            <person name="Walenz B."/>
            <person name="Shatkay H."/>
            <person name="Dew I."/>
            <person name="Miller J.R."/>
            <person name="Flanigan M.J."/>
            <person name="Edwards N.J."/>
            <person name="Bolanos R."/>
            <person name="Fasulo D."/>
            <person name="Halldorsson B.V."/>
            <person name="Hannenhalli S."/>
            <person name="Turner R."/>
            <person name="Yooseph S."/>
            <person name="Lu F."/>
            <person name="Nusskern D.R."/>
            <person name="Shue B.C."/>
            <person name="Zheng X.H."/>
            <person name="Zhong F."/>
            <person name="Delcher A.L."/>
            <person name="Huson D.H."/>
            <person name="Kravitz S.A."/>
            <person name="Mouchard L."/>
            <person name="Reinert K."/>
            <person name="Remington K.A."/>
            <person name="Clark A.G."/>
            <person name="Waterman M.S."/>
            <person name="Eichler E.E."/>
            <person name="Adams M.D."/>
            <person name="Hunkapiller M.W."/>
            <person name="Myers E.W."/>
            <person name="Venter J.C."/>
        </authorList>
    </citation>
    <scope>NUCLEOTIDE SEQUENCE [LARGE SCALE GENOMIC DNA]</scope>
</reference>
<reference key="4">
    <citation type="journal article" date="2004" name="Genome Res.">
        <title>The status, quality, and expansion of the NIH full-length cDNA project: the Mammalian Gene Collection (MGC).</title>
        <authorList>
            <consortium name="The MGC Project Team"/>
        </authorList>
    </citation>
    <scope>NUCLEOTIDE SEQUENCE [LARGE SCALE MRNA] (ISOFORM 2)</scope>
    <scope>VARIANT MET-345</scope>
</reference>
<reference key="5">
    <citation type="journal article" date="2013" name="J. Proteome Res.">
        <title>Toward a comprehensive characterization of a human cancer cell phosphoproteome.</title>
        <authorList>
            <person name="Zhou H."/>
            <person name="Di Palma S."/>
            <person name="Preisinger C."/>
            <person name="Peng M."/>
            <person name="Polat A.N."/>
            <person name="Heck A.J."/>
            <person name="Mohammed S."/>
        </authorList>
    </citation>
    <scope>IDENTIFICATION BY MASS SPECTROMETRY [LARGE SCALE ANALYSIS]</scope>
    <source>
        <tissue>Erythroleukemia</tissue>
    </source>
</reference>
<sequence length="614" mass="68414">MMRQATMDFSTPSVFDQQRGDSSEEVDLTMVYQAASNGDVNALTAVIREDPSILECCDSEGCTPLMHAVSGRQADTVKLLLKMGANINMQDAYGRTSLCLATYLGWLEGCVSLLRNGAKHNIPDKNGRLPLHAATAEPDMRLLTVLLQQSNISEINHQDNEGMTPLHWAAFHNQPQHTQMLLKKGADPTLVDKDFKTALHWAVQSGNRILCSIILSHHQGPSIINYDDESGKTCVHIAAAAGFSDIIHELARVPECNLQALDVDDRTPLHWAAAAGKAECVQSLLELGMDSNLRDINESTPLAYALYCGHTACVKLLSQESRTEPTRPPPSQSSRPQKKERRFNVLNQIFCKNKKEEQRAHQKDPSRDRYREEDTSEVNDIITTFDSIVGTNCQEQPGDQVAMVEFKKKTSDNSKYLLPEKKPLARKGLPPIRTQSLPPITLGNNFLTASHRATSHAGLSSAPHHMAQRSQKSRSEQDLLNNRTGCQMLLDNPWKSDSNQVFSYKVWTVSSSDKLLDRLLSVRPGHQEVSVPPHLRHLHNPSSGQNFQHLSPNRHKIRDLPFTRNNLAPLPDQKFLSGEPLRTNRVLPAIPSQRRHSTAAEESEHSANPTSDEN</sequence>